<organism>
    <name type="scientific">Vibrio campbellii (strain ATCC BAA-1116)</name>
    <dbReference type="NCBI Taxonomy" id="2902295"/>
    <lineage>
        <taxon>Bacteria</taxon>
        <taxon>Pseudomonadati</taxon>
        <taxon>Pseudomonadota</taxon>
        <taxon>Gammaproteobacteria</taxon>
        <taxon>Vibrionales</taxon>
        <taxon>Vibrionaceae</taxon>
        <taxon>Vibrio</taxon>
    </lineage>
</organism>
<accession>A7MTQ9</accession>
<gene>
    <name evidence="1" type="primary">rpiA</name>
    <name type="ordered locus">VIBHAR_03555</name>
</gene>
<reference key="1">
    <citation type="submission" date="2007-08" db="EMBL/GenBank/DDBJ databases">
        <authorList>
            <consortium name="The Vibrio harveyi Genome Sequencing Project"/>
            <person name="Bassler B."/>
            <person name="Clifton S.W."/>
            <person name="Fulton L."/>
            <person name="Delehaunty K."/>
            <person name="Fronick C."/>
            <person name="Harrison M."/>
            <person name="Markivic C."/>
            <person name="Fulton R."/>
            <person name="Tin-Wollam A.-M."/>
            <person name="Shah N."/>
            <person name="Pepin K."/>
            <person name="Nash W."/>
            <person name="Thiruvilangam P."/>
            <person name="Bhonagiri V."/>
            <person name="Waters C."/>
            <person name="Tu K.C."/>
            <person name="Irgon J."/>
            <person name="Wilson R.K."/>
        </authorList>
    </citation>
    <scope>NUCLEOTIDE SEQUENCE [LARGE SCALE GENOMIC DNA]</scope>
    <source>
        <strain>ATCC BAA-1116 / BB120</strain>
    </source>
</reference>
<protein>
    <recommendedName>
        <fullName evidence="1">Ribose-5-phosphate isomerase A</fullName>
        <ecNumber evidence="1">5.3.1.6</ecNumber>
    </recommendedName>
    <alternativeName>
        <fullName evidence="1">Phosphoriboisomerase A</fullName>
        <shortName evidence="1">PRI</shortName>
    </alternativeName>
</protein>
<sequence length="218" mass="23046">MTQDEMKKAAGWAALKYVEKGSIVGVGTGSTVNHFIDALGSIKDDIKGAVSSSVASTERLKELGIEVYECNDVAMLDIYVDGADEINAAREMIKGGGAALTREKIVAAISEKFVCIVDGTKAVDVLGQFPLPVEVIPMARSYVARELVKLGGDPAYREGVTTDNGNVILDVHNMQITNPKELEDKINGIAGVVTVGLFAHRGADVVITGTPEGAKIEE</sequence>
<name>RPIA_VIBC1</name>
<dbReference type="EC" id="5.3.1.6" evidence="1"/>
<dbReference type="EMBL" id="CP000789">
    <property type="protein sequence ID" value="ABU72490.1"/>
    <property type="molecule type" value="Genomic_DNA"/>
</dbReference>
<dbReference type="RefSeq" id="WP_005436473.1">
    <property type="nucleotide sequence ID" value="NC_022269.1"/>
</dbReference>
<dbReference type="SMR" id="A7MTQ9"/>
<dbReference type="GeneID" id="67376238"/>
<dbReference type="KEGG" id="vha:VIBHAR_03555"/>
<dbReference type="PATRIC" id="fig|338187.25.peg.2656"/>
<dbReference type="UniPathway" id="UPA00115">
    <property type="reaction ID" value="UER00412"/>
</dbReference>
<dbReference type="Proteomes" id="UP000008152">
    <property type="component" value="Chromosome I"/>
</dbReference>
<dbReference type="GO" id="GO:0005829">
    <property type="term" value="C:cytosol"/>
    <property type="evidence" value="ECO:0007669"/>
    <property type="project" value="TreeGrafter"/>
</dbReference>
<dbReference type="GO" id="GO:0004751">
    <property type="term" value="F:ribose-5-phosphate isomerase activity"/>
    <property type="evidence" value="ECO:0007669"/>
    <property type="project" value="UniProtKB-UniRule"/>
</dbReference>
<dbReference type="GO" id="GO:0006014">
    <property type="term" value="P:D-ribose metabolic process"/>
    <property type="evidence" value="ECO:0007669"/>
    <property type="project" value="TreeGrafter"/>
</dbReference>
<dbReference type="GO" id="GO:0009052">
    <property type="term" value="P:pentose-phosphate shunt, non-oxidative branch"/>
    <property type="evidence" value="ECO:0007669"/>
    <property type="project" value="UniProtKB-UniRule"/>
</dbReference>
<dbReference type="CDD" id="cd01398">
    <property type="entry name" value="RPI_A"/>
    <property type="match status" value="1"/>
</dbReference>
<dbReference type="FunFam" id="3.30.70.260:FF:000004">
    <property type="entry name" value="Ribose-5-phosphate isomerase A"/>
    <property type="match status" value="1"/>
</dbReference>
<dbReference type="FunFam" id="3.40.50.1360:FF:000001">
    <property type="entry name" value="Ribose-5-phosphate isomerase A"/>
    <property type="match status" value="1"/>
</dbReference>
<dbReference type="Gene3D" id="3.30.70.260">
    <property type="match status" value="1"/>
</dbReference>
<dbReference type="Gene3D" id="3.40.50.1360">
    <property type="match status" value="1"/>
</dbReference>
<dbReference type="HAMAP" id="MF_00170">
    <property type="entry name" value="Rib_5P_isom_A"/>
    <property type="match status" value="1"/>
</dbReference>
<dbReference type="InterPro" id="IPR037171">
    <property type="entry name" value="NagB/RpiA_transferase-like"/>
</dbReference>
<dbReference type="InterPro" id="IPR020672">
    <property type="entry name" value="Ribose5P_isomerase_typA_subgr"/>
</dbReference>
<dbReference type="InterPro" id="IPR004788">
    <property type="entry name" value="Ribose5P_isomerase_type_A"/>
</dbReference>
<dbReference type="NCBIfam" id="NF001924">
    <property type="entry name" value="PRK00702.1"/>
    <property type="match status" value="1"/>
</dbReference>
<dbReference type="NCBIfam" id="TIGR00021">
    <property type="entry name" value="rpiA"/>
    <property type="match status" value="1"/>
</dbReference>
<dbReference type="PANTHER" id="PTHR11934">
    <property type="entry name" value="RIBOSE-5-PHOSPHATE ISOMERASE"/>
    <property type="match status" value="1"/>
</dbReference>
<dbReference type="PANTHER" id="PTHR11934:SF0">
    <property type="entry name" value="RIBOSE-5-PHOSPHATE ISOMERASE"/>
    <property type="match status" value="1"/>
</dbReference>
<dbReference type="Pfam" id="PF06026">
    <property type="entry name" value="Rib_5-P_isom_A"/>
    <property type="match status" value="1"/>
</dbReference>
<dbReference type="SUPFAM" id="SSF75445">
    <property type="entry name" value="D-ribose-5-phosphate isomerase (RpiA), lid domain"/>
    <property type="match status" value="1"/>
</dbReference>
<dbReference type="SUPFAM" id="SSF100950">
    <property type="entry name" value="NagB/RpiA/CoA transferase-like"/>
    <property type="match status" value="1"/>
</dbReference>
<comment type="function">
    <text evidence="1">Catalyzes the reversible conversion of ribose-5-phosphate to ribulose 5-phosphate.</text>
</comment>
<comment type="catalytic activity">
    <reaction evidence="1">
        <text>aldehydo-D-ribose 5-phosphate = D-ribulose 5-phosphate</text>
        <dbReference type="Rhea" id="RHEA:14657"/>
        <dbReference type="ChEBI" id="CHEBI:58121"/>
        <dbReference type="ChEBI" id="CHEBI:58273"/>
        <dbReference type="EC" id="5.3.1.6"/>
    </reaction>
</comment>
<comment type="pathway">
    <text evidence="1">Carbohydrate degradation; pentose phosphate pathway; D-ribose 5-phosphate from D-ribulose 5-phosphate (non-oxidative stage): step 1/1.</text>
</comment>
<comment type="subunit">
    <text evidence="1">Homodimer.</text>
</comment>
<comment type="similarity">
    <text evidence="1">Belongs to the ribose 5-phosphate isomerase family.</text>
</comment>
<evidence type="ECO:0000255" key="1">
    <source>
        <dbReference type="HAMAP-Rule" id="MF_00170"/>
    </source>
</evidence>
<feature type="chain" id="PRO_1000017026" description="Ribose-5-phosphate isomerase A">
    <location>
        <begin position="1"/>
        <end position="218"/>
    </location>
</feature>
<feature type="active site" description="Proton acceptor" evidence="1">
    <location>
        <position position="103"/>
    </location>
</feature>
<feature type="binding site" evidence="1">
    <location>
        <begin position="28"/>
        <end position="31"/>
    </location>
    <ligand>
        <name>substrate</name>
    </ligand>
</feature>
<feature type="binding site" evidence="1">
    <location>
        <begin position="81"/>
        <end position="84"/>
    </location>
    <ligand>
        <name>substrate</name>
    </ligand>
</feature>
<feature type="binding site" evidence="1">
    <location>
        <begin position="94"/>
        <end position="97"/>
    </location>
    <ligand>
        <name>substrate</name>
    </ligand>
</feature>
<feature type="binding site" evidence="1">
    <location>
        <position position="121"/>
    </location>
    <ligand>
        <name>substrate</name>
    </ligand>
</feature>
<proteinExistence type="inferred from homology"/>
<keyword id="KW-0413">Isomerase</keyword>